<evidence type="ECO:0000255" key="1">
    <source>
        <dbReference type="HAMAP-Rule" id="MF_00051"/>
    </source>
</evidence>
<reference key="1">
    <citation type="journal article" date="2010" name="Genome Biol.">
        <title>Structure and dynamics of the pan-genome of Streptococcus pneumoniae and closely related species.</title>
        <authorList>
            <person name="Donati C."/>
            <person name="Hiller N.L."/>
            <person name="Tettelin H."/>
            <person name="Muzzi A."/>
            <person name="Croucher N.J."/>
            <person name="Angiuoli S.V."/>
            <person name="Oggioni M."/>
            <person name="Dunning Hotopp J.C."/>
            <person name="Hu F.Z."/>
            <person name="Riley D.R."/>
            <person name="Covacci A."/>
            <person name="Mitchell T.J."/>
            <person name="Bentley S.D."/>
            <person name="Kilian M."/>
            <person name="Ehrlich G.D."/>
            <person name="Rappuoli R."/>
            <person name="Moxon E.R."/>
            <person name="Masignani V."/>
        </authorList>
    </citation>
    <scope>NUCLEOTIDE SEQUENCE [LARGE SCALE GENOMIC DNA]</scope>
    <source>
        <strain>Hungary19A-6</strain>
    </source>
</reference>
<name>GLYA_STRPI</name>
<dbReference type="EC" id="2.1.2.1" evidence="1"/>
<dbReference type="EMBL" id="CP000936">
    <property type="protein sequence ID" value="ACA37237.1"/>
    <property type="molecule type" value="Genomic_DNA"/>
</dbReference>
<dbReference type="RefSeq" id="WP_000575488.1">
    <property type="nucleotide sequence ID" value="NC_010380.1"/>
</dbReference>
<dbReference type="SMR" id="B1IBI3"/>
<dbReference type="KEGG" id="spv:SPH_1127"/>
<dbReference type="HOGENOM" id="CLU_022477_2_1_9"/>
<dbReference type="UniPathway" id="UPA00193"/>
<dbReference type="UniPathway" id="UPA00288">
    <property type="reaction ID" value="UER01023"/>
</dbReference>
<dbReference type="Proteomes" id="UP000002163">
    <property type="component" value="Chromosome"/>
</dbReference>
<dbReference type="GO" id="GO:0005829">
    <property type="term" value="C:cytosol"/>
    <property type="evidence" value="ECO:0007669"/>
    <property type="project" value="TreeGrafter"/>
</dbReference>
<dbReference type="GO" id="GO:0004372">
    <property type="term" value="F:glycine hydroxymethyltransferase activity"/>
    <property type="evidence" value="ECO:0007669"/>
    <property type="project" value="UniProtKB-UniRule"/>
</dbReference>
<dbReference type="GO" id="GO:0030170">
    <property type="term" value="F:pyridoxal phosphate binding"/>
    <property type="evidence" value="ECO:0007669"/>
    <property type="project" value="UniProtKB-UniRule"/>
</dbReference>
<dbReference type="GO" id="GO:0019264">
    <property type="term" value="P:glycine biosynthetic process from serine"/>
    <property type="evidence" value="ECO:0007669"/>
    <property type="project" value="UniProtKB-UniRule"/>
</dbReference>
<dbReference type="GO" id="GO:0035999">
    <property type="term" value="P:tetrahydrofolate interconversion"/>
    <property type="evidence" value="ECO:0007669"/>
    <property type="project" value="UniProtKB-UniRule"/>
</dbReference>
<dbReference type="CDD" id="cd00378">
    <property type="entry name" value="SHMT"/>
    <property type="match status" value="1"/>
</dbReference>
<dbReference type="FunFam" id="3.40.640.10:FF:000001">
    <property type="entry name" value="Serine hydroxymethyltransferase"/>
    <property type="match status" value="1"/>
</dbReference>
<dbReference type="FunFam" id="3.90.1150.10:FF:000072">
    <property type="entry name" value="Serine hydroxymethyltransferase"/>
    <property type="match status" value="1"/>
</dbReference>
<dbReference type="Gene3D" id="3.90.1150.10">
    <property type="entry name" value="Aspartate Aminotransferase, domain 1"/>
    <property type="match status" value="1"/>
</dbReference>
<dbReference type="Gene3D" id="3.40.640.10">
    <property type="entry name" value="Type I PLP-dependent aspartate aminotransferase-like (Major domain)"/>
    <property type="match status" value="1"/>
</dbReference>
<dbReference type="HAMAP" id="MF_00051">
    <property type="entry name" value="SHMT"/>
    <property type="match status" value="1"/>
</dbReference>
<dbReference type="InterPro" id="IPR015424">
    <property type="entry name" value="PyrdxlP-dep_Trfase"/>
</dbReference>
<dbReference type="InterPro" id="IPR015421">
    <property type="entry name" value="PyrdxlP-dep_Trfase_major"/>
</dbReference>
<dbReference type="InterPro" id="IPR015422">
    <property type="entry name" value="PyrdxlP-dep_Trfase_small"/>
</dbReference>
<dbReference type="InterPro" id="IPR001085">
    <property type="entry name" value="Ser_HO-MeTrfase"/>
</dbReference>
<dbReference type="InterPro" id="IPR049943">
    <property type="entry name" value="Ser_HO-MeTrfase-like"/>
</dbReference>
<dbReference type="InterPro" id="IPR019798">
    <property type="entry name" value="Ser_HO-MeTrfase_PLP_BS"/>
</dbReference>
<dbReference type="InterPro" id="IPR039429">
    <property type="entry name" value="SHMT-like_dom"/>
</dbReference>
<dbReference type="NCBIfam" id="NF000586">
    <property type="entry name" value="PRK00011.1"/>
    <property type="match status" value="1"/>
</dbReference>
<dbReference type="PANTHER" id="PTHR11680">
    <property type="entry name" value="SERINE HYDROXYMETHYLTRANSFERASE"/>
    <property type="match status" value="1"/>
</dbReference>
<dbReference type="PANTHER" id="PTHR11680:SF35">
    <property type="entry name" value="SERINE HYDROXYMETHYLTRANSFERASE 1"/>
    <property type="match status" value="1"/>
</dbReference>
<dbReference type="Pfam" id="PF00464">
    <property type="entry name" value="SHMT"/>
    <property type="match status" value="1"/>
</dbReference>
<dbReference type="PIRSF" id="PIRSF000412">
    <property type="entry name" value="SHMT"/>
    <property type="match status" value="1"/>
</dbReference>
<dbReference type="SUPFAM" id="SSF53383">
    <property type="entry name" value="PLP-dependent transferases"/>
    <property type="match status" value="1"/>
</dbReference>
<dbReference type="PROSITE" id="PS00096">
    <property type="entry name" value="SHMT"/>
    <property type="match status" value="1"/>
</dbReference>
<proteinExistence type="inferred from homology"/>
<comment type="function">
    <text evidence="1">Catalyzes the reversible interconversion of serine and glycine with tetrahydrofolate (THF) serving as the one-carbon carrier. This reaction serves as the major source of one-carbon groups required for the biosynthesis of purines, thymidylate, methionine, and other important biomolecules. Also exhibits THF-independent aldolase activity toward beta-hydroxyamino acids, producing glycine and aldehydes, via a retro-aldol mechanism.</text>
</comment>
<comment type="catalytic activity">
    <reaction evidence="1">
        <text>(6R)-5,10-methylene-5,6,7,8-tetrahydrofolate + glycine + H2O = (6S)-5,6,7,8-tetrahydrofolate + L-serine</text>
        <dbReference type="Rhea" id="RHEA:15481"/>
        <dbReference type="ChEBI" id="CHEBI:15377"/>
        <dbReference type="ChEBI" id="CHEBI:15636"/>
        <dbReference type="ChEBI" id="CHEBI:33384"/>
        <dbReference type="ChEBI" id="CHEBI:57305"/>
        <dbReference type="ChEBI" id="CHEBI:57453"/>
        <dbReference type="EC" id="2.1.2.1"/>
    </reaction>
</comment>
<comment type="cofactor">
    <cofactor evidence="1">
        <name>pyridoxal 5'-phosphate</name>
        <dbReference type="ChEBI" id="CHEBI:597326"/>
    </cofactor>
</comment>
<comment type="pathway">
    <text evidence="1">One-carbon metabolism; tetrahydrofolate interconversion.</text>
</comment>
<comment type="pathway">
    <text evidence="1">Amino-acid biosynthesis; glycine biosynthesis; glycine from L-serine: step 1/1.</text>
</comment>
<comment type="subunit">
    <text evidence="1">Homodimer.</text>
</comment>
<comment type="subcellular location">
    <subcellularLocation>
        <location evidence="1">Cytoplasm</location>
    </subcellularLocation>
</comment>
<comment type="similarity">
    <text evidence="1">Belongs to the SHMT family.</text>
</comment>
<feature type="chain" id="PRO_1000091586" description="Serine hydroxymethyltransferase">
    <location>
        <begin position="1"/>
        <end position="418"/>
    </location>
</feature>
<feature type="binding site" evidence="1">
    <location>
        <position position="121"/>
    </location>
    <ligand>
        <name>(6S)-5,6,7,8-tetrahydrofolate</name>
        <dbReference type="ChEBI" id="CHEBI:57453"/>
    </ligand>
</feature>
<feature type="binding site" evidence="1">
    <location>
        <begin position="125"/>
        <end position="127"/>
    </location>
    <ligand>
        <name>(6S)-5,6,7,8-tetrahydrofolate</name>
        <dbReference type="ChEBI" id="CHEBI:57453"/>
    </ligand>
</feature>
<feature type="binding site" evidence="1">
    <location>
        <position position="246"/>
    </location>
    <ligand>
        <name>(6S)-5,6,7,8-tetrahydrofolate</name>
        <dbReference type="ChEBI" id="CHEBI:57453"/>
    </ligand>
</feature>
<feature type="binding site" evidence="1">
    <location>
        <begin position="355"/>
        <end position="357"/>
    </location>
    <ligand>
        <name>(6S)-5,6,7,8-tetrahydrofolate</name>
        <dbReference type="ChEBI" id="CHEBI:57453"/>
    </ligand>
</feature>
<feature type="site" description="Plays an important role in substrate specificity" evidence="1">
    <location>
        <position position="229"/>
    </location>
</feature>
<feature type="modified residue" description="N6-(pyridoxal phosphate)lysine" evidence="1">
    <location>
        <position position="230"/>
    </location>
</feature>
<accession>B1IBI3</accession>
<organism>
    <name type="scientific">Streptococcus pneumoniae (strain Hungary19A-6)</name>
    <dbReference type="NCBI Taxonomy" id="487214"/>
    <lineage>
        <taxon>Bacteria</taxon>
        <taxon>Bacillati</taxon>
        <taxon>Bacillota</taxon>
        <taxon>Bacilli</taxon>
        <taxon>Lactobacillales</taxon>
        <taxon>Streptococcaceae</taxon>
        <taxon>Streptococcus</taxon>
    </lineage>
</organism>
<protein>
    <recommendedName>
        <fullName evidence="1">Serine hydroxymethyltransferase</fullName>
        <shortName evidence="1">SHMT</shortName>
        <shortName evidence="1">Serine methylase</shortName>
        <ecNumber evidence="1">2.1.2.1</ecNumber>
    </recommendedName>
</protein>
<sequence>MIFDKDDFKAYDADLWNAIAKEEERQQNNIELIASENVVSKAVMAAQGSILTNKYAEGYPGRRYYGGTDVVDVVETLAIERAKEIFGAKFANVQPHSGSQANCAAYISLIEPGDTVMGMDLASGGHLTHGAPVSFSGQTYNFVSYSVDPETELLDFDAILKQAQEVKPKLIVAGASAYSQIIDFSKFREIADAVGAKLMVDMAHIAGLVAAGLHPSPVPYAHITTTTTHKTLRGPRGGLILTNDEELAKKINSAIFPGIQGGPLEHVVAAKAVSFKEVLDPAFKEYAANVIKNSKAMADVFLQDPDFRIISGGTENHLFLVDVTKVVENGKVAQNLLDEVNITLNKNSIPYETLSPFKTSGIRIGAAAITARGFGEEESRKVAELIIKTLKNSENEAVLEEVRSAVKELTDAFPLYEE</sequence>
<gene>
    <name evidence="1" type="primary">glyA</name>
    <name type="ordered locus">SPH_1127</name>
</gene>
<keyword id="KW-0028">Amino-acid biosynthesis</keyword>
<keyword id="KW-0963">Cytoplasm</keyword>
<keyword id="KW-0554">One-carbon metabolism</keyword>
<keyword id="KW-0663">Pyridoxal phosphate</keyword>
<keyword id="KW-0808">Transferase</keyword>